<proteinExistence type="inferred from homology"/>
<dbReference type="EMBL" id="AE008917">
    <property type="protein sequence ID" value="AAL52664.1"/>
    <property type="molecule type" value="Genomic_DNA"/>
</dbReference>
<dbReference type="PIR" id="AE3437">
    <property type="entry name" value="AE3437"/>
</dbReference>
<dbReference type="RefSeq" id="WP_004683101.1">
    <property type="nucleotide sequence ID" value="NZ_GG703778.1"/>
</dbReference>
<dbReference type="SMR" id="Q8YFN7"/>
<dbReference type="GeneID" id="29594326"/>
<dbReference type="KEGG" id="bme:BMEI1483"/>
<dbReference type="KEGG" id="bmel:DK63_2007"/>
<dbReference type="PATRIC" id="fig|224914.52.peg.2109"/>
<dbReference type="eggNOG" id="COG0359">
    <property type="taxonomic scope" value="Bacteria"/>
</dbReference>
<dbReference type="PhylomeDB" id="Q8YFN7"/>
<dbReference type="Proteomes" id="UP000000419">
    <property type="component" value="Chromosome I"/>
</dbReference>
<dbReference type="GO" id="GO:1990904">
    <property type="term" value="C:ribonucleoprotein complex"/>
    <property type="evidence" value="ECO:0007669"/>
    <property type="project" value="UniProtKB-KW"/>
</dbReference>
<dbReference type="GO" id="GO:0005840">
    <property type="term" value="C:ribosome"/>
    <property type="evidence" value="ECO:0007669"/>
    <property type="project" value="UniProtKB-KW"/>
</dbReference>
<dbReference type="GO" id="GO:0019843">
    <property type="term" value="F:rRNA binding"/>
    <property type="evidence" value="ECO:0007669"/>
    <property type="project" value="UniProtKB-UniRule"/>
</dbReference>
<dbReference type="GO" id="GO:0003735">
    <property type="term" value="F:structural constituent of ribosome"/>
    <property type="evidence" value="ECO:0007669"/>
    <property type="project" value="InterPro"/>
</dbReference>
<dbReference type="GO" id="GO:0006412">
    <property type="term" value="P:translation"/>
    <property type="evidence" value="ECO:0007669"/>
    <property type="project" value="UniProtKB-UniRule"/>
</dbReference>
<dbReference type="Gene3D" id="3.10.430.100">
    <property type="entry name" value="Ribosomal protein L9, C-terminal domain"/>
    <property type="match status" value="1"/>
</dbReference>
<dbReference type="Gene3D" id="3.40.5.10">
    <property type="entry name" value="Ribosomal protein L9, N-terminal domain"/>
    <property type="match status" value="1"/>
</dbReference>
<dbReference type="HAMAP" id="MF_00503">
    <property type="entry name" value="Ribosomal_bL9"/>
    <property type="match status" value="1"/>
</dbReference>
<dbReference type="InterPro" id="IPR000244">
    <property type="entry name" value="Ribosomal_bL9"/>
</dbReference>
<dbReference type="InterPro" id="IPR009027">
    <property type="entry name" value="Ribosomal_bL9/RNase_H1_N"/>
</dbReference>
<dbReference type="InterPro" id="IPR020594">
    <property type="entry name" value="Ribosomal_bL9_bac/chp"/>
</dbReference>
<dbReference type="InterPro" id="IPR020069">
    <property type="entry name" value="Ribosomal_bL9_C"/>
</dbReference>
<dbReference type="InterPro" id="IPR036791">
    <property type="entry name" value="Ribosomal_bL9_C_sf"/>
</dbReference>
<dbReference type="InterPro" id="IPR020070">
    <property type="entry name" value="Ribosomal_bL9_N"/>
</dbReference>
<dbReference type="InterPro" id="IPR036935">
    <property type="entry name" value="Ribosomal_bL9_N_sf"/>
</dbReference>
<dbReference type="NCBIfam" id="TIGR00158">
    <property type="entry name" value="L9"/>
    <property type="match status" value="1"/>
</dbReference>
<dbReference type="PANTHER" id="PTHR21368">
    <property type="entry name" value="50S RIBOSOMAL PROTEIN L9"/>
    <property type="match status" value="1"/>
</dbReference>
<dbReference type="Pfam" id="PF03948">
    <property type="entry name" value="Ribosomal_L9_C"/>
    <property type="match status" value="1"/>
</dbReference>
<dbReference type="Pfam" id="PF01281">
    <property type="entry name" value="Ribosomal_L9_N"/>
    <property type="match status" value="1"/>
</dbReference>
<dbReference type="SUPFAM" id="SSF55658">
    <property type="entry name" value="L9 N-domain-like"/>
    <property type="match status" value="1"/>
</dbReference>
<dbReference type="SUPFAM" id="SSF55653">
    <property type="entry name" value="Ribosomal protein L9 C-domain"/>
    <property type="match status" value="1"/>
</dbReference>
<dbReference type="PROSITE" id="PS00651">
    <property type="entry name" value="RIBOSOMAL_L9"/>
    <property type="match status" value="1"/>
</dbReference>
<gene>
    <name evidence="1" type="primary">rplI</name>
    <name type="ordered locus">BMEI1483</name>
</gene>
<comment type="function">
    <text evidence="1">Binds to the 23S rRNA.</text>
</comment>
<comment type="similarity">
    <text evidence="1">Belongs to the bacterial ribosomal protein bL9 family.</text>
</comment>
<name>RL9_BRUME</name>
<keyword id="KW-0687">Ribonucleoprotein</keyword>
<keyword id="KW-0689">Ribosomal protein</keyword>
<keyword id="KW-0694">RNA-binding</keyword>
<keyword id="KW-0699">rRNA-binding</keyword>
<organism>
    <name type="scientific">Brucella melitensis biotype 1 (strain ATCC 23456 / CCUG 17765 / NCTC 10094 / 16M)</name>
    <dbReference type="NCBI Taxonomy" id="224914"/>
    <lineage>
        <taxon>Bacteria</taxon>
        <taxon>Pseudomonadati</taxon>
        <taxon>Pseudomonadota</taxon>
        <taxon>Alphaproteobacteria</taxon>
        <taxon>Hyphomicrobiales</taxon>
        <taxon>Brucellaceae</taxon>
        <taxon>Brucella/Ochrobactrum group</taxon>
        <taxon>Brucella</taxon>
    </lineage>
</organism>
<sequence>MEVILLERIGRLGQMGDTVKVKDGYARNFLLPQGKALRANEANKKKFEGQRAQLEAQNLERKNEAQAVADKLNGESFIVVRSAGETGQLYGSVSTRDIAEIITANGFTLHRNQVELNHPIKTIGLHEVSVSLHPEVQVKVMVNIARSTEEAECQAKGEDLTSIEAIYGIEEQPLSEEVFDDEDEAEDQA</sequence>
<evidence type="ECO:0000255" key="1">
    <source>
        <dbReference type="HAMAP-Rule" id="MF_00503"/>
    </source>
</evidence>
<evidence type="ECO:0000305" key="2"/>
<reference key="1">
    <citation type="journal article" date="2002" name="Proc. Natl. Acad. Sci. U.S.A.">
        <title>The genome sequence of the facultative intracellular pathogen Brucella melitensis.</title>
        <authorList>
            <person name="DelVecchio V.G."/>
            <person name="Kapatral V."/>
            <person name="Redkar R.J."/>
            <person name="Patra G."/>
            <person name="Mujer C."/>
            <person name="Los T."/>
            <person name="Ivanova N."/>
            <person name="Anderson I."/>
            <person name="Bhattacharyya A."/>
            <person name="Lykidis A."/>
            <person name="Reznik G."/>
            <person name="Jablonski L."/>
            <person name="Larsen N."/>
            <person name="D'Souza M."/>
            <person name="Bernal A."/>
            <person name="Mazur M."/>
            <person name="Goltsman E."/>
            <person name="Selkov E."/>
            <person name="Elzer P.H."/>
            <person name="Hagius S."/>
            <person name="O'Callaghan D."/>
            <person name="Letesson J.-J."/>
            <person name="Haselkorn R."/>
            <person name="Kyrpides N.C."/>
            <person name="Overbeek R."/>
        </authorList>
    </citation>
    <scope>NUCLEOTIDE SEQUENCE [LARGE SCALE GENOMIC DNA]</scope>
    <source>
        <strain>ATCC 23456 / CCUG 17765 / NCTC 10094 / 16M</strain>
    </source>
</reference>
<feature type="chain" id="PRO_0000176620" description="Large ribosomal subunit protein bL9">
    <location>
        <begin position="1"/>
        <end position="189"/>
    </location>
</feature>
<accession>Q8YFN7</accession>
<protein>
    <recommendedName>
        <fullName evidence="1">Large ribosomal subunit protein bL9</fullName>
    </recommendedName>
    <alternativeName>
        <fullName evidence="2">50S ribosomal protein L9</fullName>
    </alternativeName>
</protein>